<evidence type="ECO:0000255" key="1"/>
<evidence type="ECO:0000256" key="2">
    <source>
        <dbReference type="SAM" id="MobiDB-lite"/>
    </source>
</evidence>
<evidence type="ECO:0000305" key="3"/>
<reference key="1">
    <citation type="journal article" date="2002" name="J. Bacteriol.">
        <title>Whole-genome comparison of Mycobacterium tuberculosis clinical and laboratory strains.</title>
        <authorList>
            <person name="Fleischmann R.D."/>
            <person name="Alland D."/>
            <person name="Eisen J.A."/>
            <person name="Carpenter L."/>
            <person name="White O."/>
            <person name="Peterson J.D."/>
            <person name="DeBoy R.T."/>
            <person name="Dodson R.J."/>
            <person name="Gwinn M.L."/>
            <person name="Haft D.H."/>
            <person name="Hickey E.K."/>
            <person name="Kolonay J.F."/>
            <person name="Nelson W.C."/>
            <person name="Umayam L.A."/>
            <person name="Ermolaeva M.D."/>
            <person name="Salzberg S.L."/>
            <person name="Delcher A."/>
            <person name="Utterback T.R."/>
            <person name="Weidman J.F."/>
            <person name="Khouri H.M."/>
            <person name="Gill J."/>
            <person name="Mikula A."/>
            <person name="Bishai W."/>
            <person name="Jacobs W.R. Jr."/>
            <person name="Venter J.C."/>
            <person name="Fraser C.M."/>
        </authorList>
    </citation>
    <scope>NUCLEOTIDE SEQUENCE [LARGE SCALE GENOMIC DNA]</scope>
    <source>
        <strain>CDC 1551 / Oshkosh</strain>
    </source>
</reference>
<dbReference type="EMBL" id="AE000516">
    <property type="protein sequence ID" value="AAK45630.1"/>
    <property type="status" value="ALT_INIT"/>
    <property type="molecule type" value="Genomic_DNA"/>
</dbReference>
<dbReference type="PIR" id="A70770">
    <property type="entry name" value="A70770"/>
</dbReference>
<dbReference type="RefSeq" id="WP_042507542.1">
    <property type="nucleotide sequence ID" value="NC_002755.2"/>
</dbReference>
<dbReference type="KEGG" id="mtc:MT1367"/>
<dbReference type="HOGENOM" id="CLU_000167_10_3_11"/>
<dbReference type="Proteomes" id="UP000001020">
    <property type="component" value="Chromosome"/>
</dbReference>
<dbReference type="Gene3D" id="1.10.287.850">
    <property type="entry name" value="HP0062-like domain"/>
    <property type="match status" value="1"/>
</dbReference>
<dbReference type="InterPro" id="IPR000084">
    <property type="entry name" value="PE-PGRS_N"/>
</dbReference>
<dbReference type="InterPro" id="IPR048996">
    <property type="entry name" value="PGRS_rpt"/>
</dbReference>
<dbReference type="Pfam" id="PF00934">
    <property type="entry name" value="PE"/>
    <property type="match status" value="1"/>
</dbReference>
<dbReference type="Pfam" id="PF21526">
    <property type="entry name" value="PGRS"/>
    <property type="match status" value="1"/>
</dbReference>
<dbReference type="SUPFAM" id="SSF140459">
    <property type="entry name" value="PE/PPE dimer-like"/>
    <property type="match status" value="1"/>
</dbReference>
<accession>P9WIF6</accession>
<accession>L0T9A9</accession>
<accession>Q10637</accession>
<sequence length="603" mass="49767">MSFVIAAPETLVRAASDLANIGSTLGAANAAALGPTTELLAAGADEVSAAIASLFAAHGQAYQAVSAQMSAFHAQFVQTFTAGAGAYASAEAAAAAPLEGLLNIVNTPTQLLLGRPLIGNGANGAPGTGQAVGADGLLYGNGGAGGSGAPGQAGGPGGAAGLFGNGGAGGAGGDGPGNGAAGGAGGAGGLLFGSGGAGGPGGVGNTGTGGLGGDGGAAGLFGAGGIGGAGGPGFNGGAGGAGGRSGLFEVLAAGGAGGTGGLSVNGGTGGTGGTGGGGGLFSNGGAGGAGGFGVSGSAGGNGGTGGDGGIFTGNGGTGGTGGTGTGNQLVGGEGGADGAGGNAGILFGAGGIGGTGGTGLGAPDPGGTGGKGGVGGIGGAGALFGPGGAGGTGGFGASSADQMAGGIGGSGGSGGAAKLIGDGGAGGTGGDSVRGAAGSGGTGGTGGLIGDGGAGGAGGTGIEFGSVGGAGGAGGNAAGLSGAGGAGGAGGFGETAGDGGAGGNAGLFNGDGGAGGAGGLGIAGDGGNGGKGGKAGMVGNGGDGGAGGASVVANGGVGGSGGNATLIGNGGNGGNGGVGSAPGKGGAGGTAGLLGLNGSPGLS</sequence>
<gene>
    <name type="primary">PE_PGRS24</name>
    <name type="ordered locus">MT1367</name>
</gene>
<name>PG24_MYCTO</name>
<comment type="similarity">
    <text evidence="3">Belongs to the mycobacterial PE family. PGRS subfamily.</text>
</comment>
<comment type="sequence caution" evidence="3">
    <conflict type="erroneous initiation">
        <sequence resource="EMBL-CDS" id="AAK45630"/>
    </conflict>
</comment>
<keyword id="KW-1185">Reference proteome</keyword>
<keyword id="KW-0677">Repeat</keyword>
<feature type="chain" id="PRO_0000428015" description="Uncharacterized PE-PGRS family protein PE_PGRS24">
    <location>
        <begin position="1"/>
        <end position="603"/>
    </location>
</feature>
<feature type="domain" description="PE" evidence="1">
    <location>
        <begin position="1"/>
        <end position="93"/>
    </location>
</feature>
<feature type="region of interest" description="Disordered" evidence="2">
    <location>
        <begin position="309"/>
        <end position="333"/>
    </location>
</feature>
<protein>
    <recommendedName>
        <fullName>Uncharacterized PE-PGRS family protein PE_PGRS24</fullName>
    </recommendedName>
</protein>
<organism>
    <name type="scientific">Mycobacterium tuberculosis (strain CDC 1551 / Oshkosh)</name>
    <dbReference type="NCBI Taxonomy" id="83331"/>
    <lineage>
        <taxon>Bacteria</taxon>
        <taxon>Bacillati</taxon>
        <taxon>Actinomycetota</taxon>
        <taxon>Actinomycetes</taxon>
        <taxon>Mycobacteriales</taxon>
        <taxon>Mycobacteriaceae</taxon>
        <taxon>Mycobacterium</taxon>
        <taxon>Mycobacterium tuberculosis complex</taxon>
    </lineage>
</organism>
<proteinExistence type="inferred from homology"/>